<sequence length="10" mass="1145">QSVPTFTPRL</sequence>
<evidence type="ECO:0000269" key="1">
    <source>
    </source>
</evidence>
<evidence type="ECO:0000305" key="2"/>
<reference key="1">
    <citation type="journal article" date="1993" name="Comp. Biochem. Physiol.">
        <title>Isolation, identification and synthesis of locustapyrokinin II from Locusta migratoria, another member of the FXPRL-amide peptide family.</title>
        <authorList>
            <person name="Schoofs L."/>
            <person name="Holman G.M."/>
            <person name="Nachman R."/>
            <person name="Proost P."/>
            <person name="van Damme J."/>
            <person name="de Loof A."/>
        </authorList>
    </citation>
    <scope>PROTEIN SEQUENCE</scope>
    <scope>PYROGLUTAMATE FORMATION AT GLN-1</scope>
    <scope>AMIDATION AT LEU-10</scope>
    <source>
        <tissue>Brain</tissue>
    </source>
</reference>
<keyword id="KW-0027">Amidation</keyword>
<keyword id="KW-0903">Direct protein sequencing</keyword>
<keyword id="KW-0527">Neuropeptide</keyword>
<keyword id="KW-0873">Pyrrolidone carboxylic acid</keyword>
<keyword id="KW-0964">Secreted</keyword>
<proteinExistence type="evidence at protein level"/>
<dbReference type="GO" id="GO:0005576">
    <property type="term" value="C:extracellular region"/>
    <property type="evidence" value="ECO:0007669"/>
    <property type="project" value="UniProtKB-SubCell"/>
</dbReference>
<dbReference type="GO" id="GO:0007218">
    <property type="term" value="P:neuropeptide signaling pathway"/>
    <property type="evidence" value="ECO:0007669"/>
    <property type="project" value="UniProtKB-KW"/>
</dbReference>
<dbReference type="PROSITE" id="PS00539">
    <property type="entry name" value="PYROKININ"/>
    <property type="match status" value="1"/>
</dbReference>
<feature type="peptide" id="PRO_0000044318" description="Locustapyrokinin-2">
    <location>
        <begin position="1"/>
        <end position="10"/>
    </location>
</feature>
<feature type="modified residue" description="Pyrrolidone carboxylic acid" evidence="1">
    <location>
        <position position="1"/>
    </location>
</feature>
<feature type="modified residue" description="Leucine amide" evidence="1">
    <location>
        <position position="10"/>
    </location>
</feature>
<comment type="function">
    <text>Mediates visceral muscle contractile activity (myotropic activity).</text>
</comment>
<comment type="subcellular location">
    <subcellularLocation>
        <location>Secreted</location>
    </subcellularLocation>
</comment>
<comment type="similarity">
    <text evidence="2">Belongs to the pyrokinin family.</text>
</comment>
<name>LPK2_LOCMI</name>
<protein>
    <recommendedName>
        <fullName>Locustapyrokinin-2</fullName>
    </recommendedName>
    <alternativeName>
        <fullName>FXPRL-amide</fullName>
    </alternativeName>
    <alternativeName>
        <fullName>Lom-PK-2</fullName>
    </alternativeName>
</protein>
<organism>
    <name type="scientific">Locusta migratoria</name>
    <name type="common">Migratory locust</name>
    <dbReference type="NCBI Taxonomy" id="7004"/>
    <lineage>
        <taxon>Eukaryota</taxon>
        <taxon>Metazoa</taxon>
        <taxon>Ecdysozoa</taxon>
        <taxon>Arthropoda</taxon>
        <taxon>Hexapoda</taxon>
        <taxon>Insecta</taxon>
        <taxon>Pterygota</taxon>
        <taxon>Neoptera</taxon>
        <taxon>Polyneoptera</taxon>
        <taxon>Orthoptera</taxon>
        <taxon>Caelifera</taxon>
        <taxon>Acrididea</taxon>
        <taxon>Acridomorpha</taxon>
        <taxon>Acridoidea</taxon>
        <taxon>Acrididae</taxon>
        <taxon>Oedipodinae</taxon>
        <taxon>Locusta</taxon>
    </lineage>
</organism>
<accession>P41488</accession>